<proteinExistence type="evidence at protein level"/>
<gene>
    <name type="ordered locus">Ta0600</name>
</gene>
<accession>Q9HKJ8</accession>
<organism>
    <name type="scientific">Thermoplasma acidophilum (strain ATCC 25905 / DSM 1728 / JCM 9062 / NBRC 15155 / AMRC-C165)</name>
    <dbReference type="NCBI Taxonomy" id="273075"/>
    <lineage>
        <taxon>Archaea</taxon>
        <taxon>Methanobacteriati</taxon>
        <taxon>Thermoplasmatota</taxon>
        <taxon>Thermoplasmata</taxon>
        <taxon>Thermoplasmatales</taxon>
        <taxon>Thermoplasmataceae</taxon>
        <taxon>Thermoplasma</taxon>
    </lineage>
</organism>
<protein>
    <recommendedName>
        <fullName>UPF0147 protein Ta0600</fullName>
    </recommendedName>
</protein>
<keyword id="KW-0002">3D-structure</keyword>
<keyword id="KW-1185">Reference proteome</keyword>
<comment type="similarity">
    <text evidence="1">Belongs to the UPF0147 family.</text>
</comment>
<reference key="1">
    <citation type="journal article" date="2000" name="Nature">
        <title>The genome sequence of the thermoacidophilic scavenger Thermoplasma acidophilum.</title>
        <authorList>
            <person name="Ruepp A."/>
            <person name="Graml W."/>
            <person name="Santos-Martinez M.-L."/>
            <person name="Koretke K.K."/>
            <person name="Volker C."/>
            <person name="Mewes H.-W."/>
            <person name="Frishman D."/>
            <person name="Stocker S."/>
            <person name="Lupas A.N."/>
            <person name="Baumeister W."/>
        </authorList>
    </citation>
    <scope>NUCLEOTIDE SEQUENCE [LARGE SCALE GENOMIC DNA]</scope>
    <source>
        <strain>ATCC 25905 / DSM 1728 / JCM 9062 / NBRC 15155 / AMRC-C165</strain>
    </source>
</reference>
<evidence type="ECO:0000305" key="1"/>
<evidence type="ECO:0007829" key="2">
    <source>
        <dbReference type="PDB" id="2QSB"/>
    </source>
</evidence>
<feature type="chain" id="PRO_0000150919" description="UPF0147 protein Ta0600">
    <location>
        <begin position="1"/>
        <end position="88"/>
    </location>
</feature>
<feature type="helix" evidence="2">
    <location>
        <begin position="3"/>
        <end position="20"/>
    </location>
</feature>
<feature type="helix" evidence="2">
    <location>
        <begin position="27"/>
        <end position="40"/>
    </location>
</feature>
<feature type="helix" evidence="2">
    <location>
        <begin position="47"/>
        <end position="62"/>
    </location>
</feature>
<feature type="helix" evidence="2">
    <location>
        <begin position="69"/>
        <end position="85"/>
    </location>
</feature>
<dbReference type="EMBL" id="AL445064">
    <property type="protein sequence ID" value="CAC11739.1"/>
    <property type="molecule type" value="Genomic_DNA"/>
</dbReference>
<dbReference type="PDB" id="2QSB">
    <property type="method" value="X-ray"/>
    <property type="resolution" value="1.30 A"/>
    <property type="chains" value="A=1-86"/>
</dbReference>
<dbReference type="PDBsum" id="2QSB"/>
<dbReference type="SMR" id="Q9HKJ8"/>
<dbReference type="STRING" id="273075.gene:9571819"/>
<dbReference type="PaxDb" id="273075-Ta0600"/>
<dbReference type="EnsemblBacteria" id="CAC11739">
    <property type="protein sequence ID" value="CAC11739"/>
    <property type="gene ID" value="CAC11739"/>
</dbReference>
<dbReference type="KEGG" id="tac:Ta0600"/>
<dbReference type="eggNOG" id="arCOG04308">
    <property type="taxonomic scope" value="Archaea"/>
</dbReference>
<dbReference type="HOGENOM" id="CLU_165882_1_0_2"/>
<dbReference type="InParanoid" id="Q9HKJ8"/>
<dbReference type="OrthoDB" id="65304at2157"/>
<dbReference type="EvolutionaryTrace" id="Q9HKJ8"/>
<dbReference type="Proteomes" id="UP000001024">
    <property type="component" value="Chromosome"/>
</dbReference>
<dbReference type="Gene3D" id="1.20.1440.50">
    <property type="entry name" value="Ta0600-like"/>
    <property type="match status" value="1"/>
</dbReference>
<dbReference type="HAMAP" id="MF_00342">
    <property type="entry name" value="UPF0147"/>
    <property type="match status" value="1"/>
</dbReference>
<dbReference type="InterPro" id="IPR023130">
    <property type="entry name" value="Ta0600-like_sf"/>
</dbReference>
<dbReference type="InterPro" id="IPR005354">
    <property type="entry name" value="UPF0147"/>
</dbReference>
<dbReference type="NCBIfam" id="NF003319">
    <property type="entry name" value="PRK04330.1"/>
    <property type="match status" value="1"/>
</dbReference>
<dbReference type="Pfam" id="PF03685">
    <property type="entry name" value="UPF0147"/>
    <property type="match status" value="1"/>
</dbReference>
<dbReference type="SUPFAM" id="SSF158436">
    <property type="entry name" value="Ta0600-like"/>
    <property type="match status" value="1"/>
</dbReference>
<sequence>MVRVDQNLFNEVMYLLDELSQDITVPKNVRKVAQDSKAKLSQENESLDLRCATVLSMLDEMANDPNVPAHGRTDLYTIISKLEALSKS</sequence>
<name>Y600_THEAC</name>